<name>NUOK_HELPB</name>
<protein>
    <recommendedName>
        <fullName evidence="1">NADH-quinone oxidoreductase subunit K</fullName>
        <ecNumber evidence="1">7.1.1.-</ecNumber>
    </recommendedName>
    <alternativeName>
        <fullName evidence="1">NADH dehydrogenase I subunit K</fullName>
    </alternativeName>
    <alternativeName>
        <fullName evidence="1">NDH-1 subunit K</fullName>
    </alternativeName>
</protein>
<feature type="chain" id="PRO_0000390092" description="NADH-quinone oxidoreductase subunit K">
    <location>
        <begin position="1"/>
        <end position="100"/>
    </location>
</feature>
<feature type="transmembrane region" description="Helical" evidence="1">
    <location>
        <begin position="1"/>
        <end position="21"/>
    </location>
</feature>
<feature type="transmembrane region" description="Helical" evidence="1">
    <location>
        <begin position="28"/>
        <end position="48"/>
    </location>
</feature>
<feature type="transmembrane region" description="Helical" evidence="1">
    <location>
        <begin position="64"/>
        <end position="84"/>
    </location>
</feature>
<gene>
    <name evidence="1" type="primary">nuoK</name>
    <name type="ordered locus">HELPY_1246</name>
</gene>
<accession>C7C0H5</accession>
<evidence type="ECO:0000255" key="1">
    <source>
        <dbReference type="HAMAP-Rule" id="MF_01456"/>
    </source>
</evidence>
<keyword id="KW-0997">Cell inner membrane</keyword>
<keyword id="KW-1003">Cell membrane</keyword>
<keyword id="KW-0472">Membrane</keyword>
<keyword id="KW-0520">NAD</keyword>
<keyword id="KW-0874">Quinone</keyword>
<keyword id="KW-1278">Translocase</keyword>
<keyword id="KW-0812">Transmembrane</keyword>
<keyword id="KW-1133">Transmembrane helix</keyword>
<keyword id="KW-0813">Transport</keyword>
<keyword id="KW-0830">Ubiquinone</keyword>
<reference key="1">
    <citation type="journal article" date="2010" name="BMC Genomics">
        <title>From array-based hybridization of Helicobacter pylori isolates to the complete genome sequence of an isolate associated with MALT lymphoma.</title>
        <authorList>
            <person name="Thiberge J.M."/>
            <person name="Boursaux-Eude C."/>
            <person name="Lehours P."/>
            <person name="Dillies M.A."/>
            <person name="Creno S."/>
            <person name="Coppee J.Y."/>
            <person name="Rouy Z."/>
            <person name="Lajus A."/>
            <person name="Ma L."/>
            <person name="Burucoa C."/>
            <person name="Ruskone-Foumestraux A."/>
            <person name="Courillon-Mallet A."/>
            <person name="De Reuse H."/>
            <person name="Boneca I.G."/>
            <person name="Lamarque D."/>
            <person name="Megraud F."/>
            <person name="Delchier J.C."/>
            <person name="Medigue C."/>
            <person name="Bouchier C."/>
            <person name="Labigne A."/>
            <person name="Raymond J."/>
        </authorList>
    </citation>
    <scope>NUCLEOTIDE SEQUENCE [LARGE SCALE GENOMIC DNA]</scope>
    <source>
        <strain>B38</strain>
    </source>
</reference>
<organism>
    <name type="scientific">Helicobacter pylori (strain B38)</name>
    <dbReference type="NCBI Taxonomy" id="592205"/>
    <lineage>
        <taxon>Bacteria</taxon>
        <taxon>Pseudomonadati</taxon>
        <taxon>Campylobacterota</taxon>
        <taxon>Epsilonproteobacteria</taxon>
        <taxon>Campylobacterales</taxon>
        <taxon>Helicobacteraceae</taxon>
        <taxon>Helicobacter</taxon>
    </lineage>
</organism>
<dbReference type="EC" id="7.1.1.-" evidence="1"/>
<dbReference type="EMBL" id="FM991728">
    <property type="protein sequence ID" value="CAX29956.1"/>
    <property type="molecule type" value="Genomic_DNA"/>
</dbReference>
<dbReference type="RefSeq" id="WP_000579769.1">
    <property type="nucleotide sequence ID" value="NC_012973.1"/>
</dbReference>
<dbReference type="SMR" id="C7C0H5"/>
<dbReference type="KEGG" id="hpb:HELPY_1246"/>
<dbReference type="HOGENOM" id="CLU_144724_0_0_7"/>
<dbReference type="GO" id="GO:0030964">
    <property type="term" value="C:NADH dehydrogenase complex"/>
    <property type="evidence" value="ECO:0007669"/>
    <property type="project" value="TreeGrafter"/>
</dbReference>
<dbReference type="GO" id="GO:0005886">
    <property type="term" value="C:plasma membrane"/>
    <property type="evidence" value="ECO:0007669"/>
    <property type="project" value="UniProtKB-SubCell"/>
</dbReference>
<dbReference type="GO" id="GO:0050136">
    <property type="term" value="F:NADH:ubiquinone reductase (non-electrogenic) activity"/>
    <property type="evidence" value="ECO:0007669"/>
    <property type="project" value="UniProtKB-UniRule"/>
</dbReference>
<dbReference type="GO" id="GO:0048038">
    <property type="term" value="F:quinone binding"/>
    <property type="evidence" value="ECO:0007669"/>
    <property type="project" value="UniProtKB-KW"/>
</dbReference>
<dbReference type="GO" id="GO:0042773">
    <property type="term" value="P:ATP synthesis coupled electron transport"/>
    <property type="evidence" value="ECO:0007669"/>
    <property type="project" value="InterPro"/>
</dbReference>
<dbReference type="FunFam" id="1.10.287.3510:FF:000001">
    <property type="entry name" value="NADH-quinone oxidoreductase subunit K"/>
    <property type="match status" value="1"/>
</dbReference>
<dbReference type="Gene3D" id="1.10.287.3510">
    <property type="match status" value="1"/>
</dbReference>
<dbReference type="HAMAP" id="MF_01456">
    <property type="entry name" value="NDH1_NuoK"/>
    <property type="match status" value="1"/>
</dbReference>
<dbReference type="InterPro" id="IPR001133">
    <property type="entry name" value="NADH_UbQ_OxRdtase_chain4L/K"/>
</dbReference>
<dbReference type="InterPro" id="IPR039428">
    <property type="entry name" value="NUOK/Mnh_C1-like"/>
</dbReference>
<dbReference type="NCBIfam" id="NF004320">
    <property type="entry name" value="PRK05715.1-2"/>
    <property type="match status" value="1"/>
</dbReference>
<dbReference type="NCBIfam" id="NF004321">
    <property type="entry name" value="PRK05715.1-3"/>
    <property type="match status" value="1"/>
</dbReference>
<dbReference type="NCBIfam" id="NF004323">
    <property type="entry name" value="PRK05715.1-5"/>
    <property type="match status" value="1"/>
</dbReference>
<dbReference type="PANTHER" id="PTHR11434:SF21">
    <property type="entry name" value="NADH DEHYDROGENASE SUBUNIT 4L-RELATED"/>
    <property type="match status" value="1"/>
</dbReference>
<dbReference type="PANTHER" id="PTHR11434">
    <property type="entry name" value="NADH-UBIQUINONE OXIDOREDUCTASE SUBUNIT ND4L"/>
    <property type="match status" value="1"/>
</dbReference>
<dbReference type="Pfam" id="PF00420">
    <property type="entry name" value="Oxidored_q2"/>
    <property type="match status" value="1"/>
</dbReference>
<comment type="function">
    <text evidence="1">NDH-1 shuttles electrons from NADH, via FMN and iron-sulfur (Fe-S) centers, to quinones in the respiratory chain. The immediate electron acceptor for the enzyme in this species is believed to be ubiquinone. Couples the redox reaction to proton translocation (for every two electrons transferred, four hydrogen ions are translocated across the cytoplasmic membrane), and thus conserves the redox energy in a proton gradient.</text>
</comment>
<comment type="catalytic activity">
    <reaction evidence="1">
        <text>a quinone + NADH + 5 H(+)(in) = a quinol + NAD(+) + 4 H(+)(out)</text>
        <dbReference type="Rhea" id="RHEA:57888"/>
        <dbReference type="ChEBI" id="CHEBI:15378"/>
        <dbReference type="ChEBI" id="CHEBI:24646"/>
        <dbReference type="ChEBI" id="CHEBI:57540"/>
        <dbReference type="ChEBI" id="CHEBI:57945"/>
        <dbReference type="ChEBI" id="CHEBI:132124"/>
    </reaction>
</comment>
<comment type="subunit">
    <text evidence="1">NDH-1 is composed of 14 different subunits. Subunits NuoA, H, J, K, L, M, N constitute the membrane sector of the complex.</text>
</comment>
<comment type="subcellular location">
    <subcellularLocation>
        <location evidence="1">Cell inner membrane</location>
        <topology evidence="1">Multi-pass membrane protein</topology>
    </subcellularLocation>
</comment>
<comment type="similarity">
    <text evidence="1">Belongs to the complex I subunit 4L family.</text>
</comment>
<sequence length="100" mass="11037">MIGLNHYLIVSGLLFCIGLAGMLKRKNILLLFFSTEIMLNAINIGFVAISRYTHNLDGQMFALFIIAIAASEVAIGLGLVILWFKKYKSLDIDSLNAMKG</sequence>
<proteinExistence type="inferred from homology"/>